<protein>
    <recommendedName>
        <fullName evidence="1">Putative 3-methyladenine DNA glycosylase</fullName>
        <ecNumber evidence="1">3.2.2.-</ecNumber>
    </recommendedName>
</protein>
<dbReference type="EC" id="3.2.2.-" evidence="1"/>
<dbReference type="EMBL" id="AM286280">
    <property type="protein sequence ID" value="CAL08682.1"/>
    <property type="molecule type" value="Genomic_DNA"/>
</dbReference>
<dbReference type="RefSeq" id="WP_003020434.1">
    <property type="nucleotide sequence ID" value="NC_008245.1"/>
</dbReference>
<dbReference type="SMR" id="Q14IG1"/>
<dbReference type="KEGG" id="ftf:FTF0666c"/>
<dbReference type="HOGENOM" id="CLU_060471_0_2_6"/>
<dbReference type="GO" id="GO:0003905">
    <property type="term" value="F:alkylbase DNA N-glycosylase activity"/>
    <property type="evidence" value="ECO:0007669"/>
    <property type="project" value="InterPro"/>
</dbReference>
<dbReference type="GO" id="GO:0003677">
    <property type="term" value="F:DNA binding"/>
    <property type="evidence" value="ECO:0007669"/>
    <property type="project" value="InterPro"/>
</dbReference>
<dbReference type="GO" id="GO:0006284">
    <property type="term" value="P:base-excision repair"/>
    <property type="evidence" value="ECO:0007669"/>
    <property type="project" value="InterPro"/>
</dbReference>
<dbReference type="CDD" id="cd00540">
    <property type="entry name" value="AAG"/>
    <property type="match status" value="1"/>
</dbReference>
<dbReference type="FunFam" id="3.10.300.10:FF:000001">
    <property type="entry name" value="Putative 3-methyladenine DNA glycosylase"/>
    <property type="match status" value="1"/>
</dbReference>
<dbReference type="Gene3D" id="3.10.300.10">
    <property type="entry name" value="Methylpurine-DNA glycosylase (MPG)"/>
    <property type="match status" value="1"/>
</dbReference>
<dbReference type="HAMAP" id="MF_00527">
    <property type="entry name" value="3MGH"/>
    <property type="match status" value="1"/>
</dbReference>
<dbReference type="InterPro" id="IPR011034">
    <property type="entry name" value="Formyl_transferase-like_C_sf"/>
</dbReference>
<dbReference type="InterPro" id="IPR003180">
    <property type="entry name" value="MPG"/>
</dbReference>
<dbReference type="InterPro" id="IPR036995">
    <property type="entry name" value="MPG_sf"/>
</dbReference>
<dbReference type="NCBIfam" id="TIGR00567">
    <property type="entry name" value="3mg"/>
    <property type="match status" value="1"/>
</dbReference>
<dbReference type="NCBIfam" id="NF002003">
    <property type="entry name" value="PRK00802.1-3"/>
    <property type="match status" value="1"/>
</dbReference>
<dbReference type="PANTHER" id="PTHR10429">
    <property type="entry name" value="DNA-3-METHYLADENINE GLYCOSYLASE"/>
    <property type="match status" value="1"/>
</dbReference>
<dbReference type="PANTHER" id="PTHR10429:SF0">
    <property type="entry name" value="DNA-3-METHYLADENINE GLYCOSYLASE"/>
    <property type="match status" value="1"/>
</dbReference>
<dbReference type="Pfam" id="PF02245">
    <property type="entry name" value="Pur_DNA_glyco"/>
    <property type="match status" value="1"/>
</dbReference>
<dbReference type="SUPFAM" id="SSF50486">
    <property type="entry name" value="FMT C-terminal domain-like"/>
    <property type="match status" value="1"/>
</dbReference>
<gene>
    <name type="ordered locus">FTF0666c</name>
</gene>
<keyword id="KW-0227">DNA damage</keyword>
<keyword id="KW-0234">DNA repair</keyword>
<keyword id="KW-0378">Hydrolase</keyword>
<evidence type="ECO:0000255" key="1">
    <source>
        <dbReference type="HAMAP-Rule" id="MF_00527"/>
    </source>
</evidence>
<feature type="chain" id="PRO_0000265023" description="Putative 3-methyladenine DNA glycosylase">
    <location>
        <begin position="1"/>
        <end position="193"/>
    </location>
</feature>
<sequence length="193" mass="21912">MNNLEAILRLKTIDAAKKLLGHFLVSKYNNKILIGKIVETEAYLYNDPACHSYSNRTKRNSMMYAQAGTSYVYFTYGMHYCFNVVTADVGIGEAILIRALEPIAGIEQMQLNRSKTKLMDLCSGPAKLTQALNINLKDNGINLLDKDSSILLRYNNDLINEIDIVQTQRIGISKAKDMPYRFYIKDNIFVSKK</sequence>
<name>3MGH_FRAT1</name>
<organism>
    <name type="scientific">Francisella tularensis subsp. tularensis (strain FSC 198)</name>
    <dbReference type="NCBI Taxonomy" id="393115"/>
    <lineage>
        <taxon>Bacteria</taxon>
        <taxon>Pseudomonadati</taxon>
        <taxon>Pseudomonadota</taxon>
        <taxon>Gammaproteobacteria</taxon>
        <taxon>Thiotrichales</taxon>
        <taxon>Francisellaceae</taxon>
        <taxon>Francisella</taxon>
    </lineage>
</organism>
<reference key="1">
    <citation type="journal article" date="2007" name="PLoS ONE">
        <title>Genome sequencing shows that European isolates of Francisella tularensis subspecies tularensis are almost identical to US laboratory strain Schu S4.</title>
        <authorList>
            <person name="Chaudhuri R.R."/>
            <person name="Ren C.-P."/>
            <person name="Desmond L."/>
            <person name="Vincent G.A."/>
            <person name="Silman N.J."/>
            <person name="Brehm J.K."/>
            <person name="Elmore M.J."/>
            <person name="Hudson M.J."/>
            <person name="Forsman M."/>
            <person name="Isherwood K.E."/>
            <person name="Gurycova D."/>
            <person name="Minton N.P."/>
            <person name="Titball R.W."/>
            <person name="Pallen M.J."/>
            <person name="Vipond R."/>
        </authorList>
    </citation>
    <scope>NUCLEOTIDE SEQUENCE [LARGE SCALE GENOMIC DNA]</scope>
    <source>
        <strain>FSC 198</strain>
    </source>
</reference>
<proteinExistence type="inferred from homology"/>
<accession>Q14IG1</accession>
<comment type="similarity">
    <text evidence="1">Belongs to the DNA glycosylase MPG family.</text>
</comment>